<keyword id="KW-0068">Autocatalytic cleavage</keyword>
<keyword id="KW-0106">Calcium</keyword>
<keyword id="KW-0177">Collagen degradation</keyword>
<keyword id="KW-1015">Disulfide bond</keyword>
<keyword id="KW-0272">Extracellular matrix</keyword>
<keyword id="KW-0325">Glycoprotein</keyword>
<keyword id="KW-0378">Hydrolase</keyword>
<keyword id="KW-0479">Metal-binding</keyword>
<keyword id="KW-0482">Metalloprotease</keyword>
<keyword id="KW-0645">Protease</keyword>
<keyword id="KW-1185">Reference proteome</keyword>
<keyword id="KW-0677">Repeat</keyword>
<keyword id="KW-0964">Secreted</keyword>
<keyword id="KW-0732">Signal</keyword>
<keyword id="KW-0862">Zinc</keyword>
<keyword id="KW-0865">Zymogen</keyword>
<sequence>MPSLPLLLRLWAASSYSFPVIQDGLQKNVKTVWKYLENYYNLGKNMQAKNVNGKEVMAEKLRQMQQLFGLKVTGNSDPETLRAMKKPRCGVPDVAPYAITHNNPRWTKTHLTYSILNYTPYLSKAVVEDAIARAFRVWSDVTPLTFQRVFEEEGDIVLSFHRGDHGDLYTFDGSKYHFAHAFLPGLGLGGNVHYDLDQKWTDNNEDFNLFYVTAHELGHSLGLSHSNDEEALMFPSYTWSNKDFVLNQDDINRIQALYGPSPNPIQLTDATLDPCNSGLTFDAIITYRGEVIFFKDRFYIRVISFLPEPLIDVIDLTWPNLPGKFDAAYEVSGVDELRFFKGSKVWAVQEQNVLEGFPMDIQSFFGFPSNVTNIDAAVCEEETGKTYFFVDHMYWRYDENTRSMDPGYPRLIAEDFPGIDYKVDDVIQKEDNFYFFHQSIQYRFNLKTRRIDDSSDINTWFNC</sequence>
<dbReference type="EC" id="3.4.24.7"/>
<dbReference type="EMBL" id="AJ278461">
    <property type="protein sequence ID" value="CAC18879.1"/>
    <property type="molecule type" value="mRNA"/>
</dbReference>
<dbReference type="CCDS" id="CCDS22805.1"/>
<dbReference type="SMR" id="Q9EPL6"/>
<dbReference type="FunCoup" id="Q9EPL6">
    <property type="interactions" value="30"/>
</dbReference>
<dbReference type="STRING" id="10090.ENSMUSP00000047261"/>
<dbReference type="MEROPS" id="M10.034"/>
<dbReference type="GlyCosmos" id="Q9EPL6">
    <property type="glycosylation" value="1 site, No reported glycans"/>
</dbReference>
<dbReference type="GlyGen" id="Q9EPL6">
    <property type="glycosylation" value="1 site"/>
</dbReference>
<dbReference type="iPTMnet" id="Q9EPL6"/>
<dbReference type="PhosphoSitePlus" id="Q9EPL6"/>
<dbReference type="PaxDb" id="10090-ENSMUSP00000047261"/>
<dbReference type="AGR" id="MGI:1933847"/>
<dbReference type="MGI" id="MGI:1933847">
    <property type="gene designation" value="Mmp1b"/>
</dbReference>
<dbReference type="eggNOG" id="KOG1565">
    <property type="taxonomic scope" value="Eukaryota"/>
</dbReference>
<dbReference type="InParanoid" id="Q9EPL6"/>
<dbReference type="OrthoDB" id="406838at2759"/>
<dbReference type="PhylomeDB" id="Q9EPL6"/>
<dbReference type="PRO" id="PR:Q9EPL6"/>
<dbReference type="Proteomes" id="UP000000589">
    <property type="component" value="Unplaced"/>
</dbReference>
<dbReference type="RNAct" id="Q9EPL6">
    <property type="molecule type" value="protein"/>
</dbReference>
<dbReference type="GO" id="GO:0031012">
    <property type="term" value="C:extracellular matrix"/>
    <property type="evidence" value="ECO:0007669"/>
    <property type="project" value="InterPro"/>
</dbReference>
<dbReference type="GO" id="GO:0005576">
    <property type="term" value="C:extracellular region"/>
    <property type="evidence" value="ECO:0007669"/>
    <property type="project" value="UniProtKB-KW"/>
</dbReference>
<dbReference type="GO" id="GO:0004222">
    <property type="term" value="F:metalloendopeptidase activity"/>
    <property type="evidence" value="ECO:0007669"/>
    <property type="project" value="UniProtKB-EC"/>
</dbReference>
<dbReference type="GO" id="GO:0008233">
    <property type="term" value="F:peptidase activity"/>
    <property type="evidence" value="ECO:0000314"/>
    <property type="project" value="MGI"/>
</dbReference>
<dbReference type="GO" id="GO:0008270">
    <property type="term" value="F:zinc ion binding"/>
    <property type="evidence" value="ECO:0007669"/>
    <property type="project" value="InterPro"/>
</dbReference>
<dbReference type="GO" id="GO:0030574">
    <property type="term" value="P:collagen catabolic process"/>
    <property type="evidence" value="ECO:0007669"/>
    <property type="project" value="UniProtKB-KW"/>
</dbReference>
<dbReference type="GO" id="GO:0006508">
    <property type="term" value="P:proteolysis"/>
    <property type="evidence" value="ECO:0007669"/>
    <property type="project" value="UniProtKB-KW"/>
</dbReference>
<dbReference type="CDD" id="cd00094">
    <property type="entry name" value="HX"/>
    <property type="match status" value="1"/>
</dbReference>
<dbReference type="CDD" id="cd04278">
    <property type="entry name" value="ZnMc_MMP"/>
    <property type="match status" value="1"/>
</dbReference>
<dbReference type="FunFam" id="3.40.390.10:FF:000007">
    <property type="entry name" value="Collagenase 3"/>
    <property type="match status" value="1"/>
</dbReference>
<dbReference type="FunFam" id="2.110.10.10:FF:000002">
    <property type="entry name" value="Matrix metallopeptidase 3"/>
    <property type="match status" value="1"/>
</dbReference>
<dbReference type="Gene3D" id="3.40.390.10">
    <property type="entry name" value="Collagenase (Catalytic Domain)"/>
    <property type="match status" value="1"/>
</dbReference>
<dbReference type="Gene3D" id="2.110.10.10">
    <property type="entry name" value="Hemopexin-like domain"/>
    <property type="match status" value="1"/>
</dbReference>
<dbReference type="InterPro" id="IPR000585">
    <property type="entry name" value="Hemopexin-like_dom"/>
</dbReference>
<dbReference type="InterPro" id="IPR036375">
    <property type="entry name" value="Hemopexin-like_dom_sf"/>
</dbReference>
<dbReference type="InterPro" id="IPR018487">
    <property type="entry name" value="Hemopexin-like_repeat"/>
</dbReference>
<dbReference type="InterPro" id="IPR018486">
    <property type="entry name" value="Hemopexin_CS"/>
</dbReference>
<dbReference type="InterPro" id="IPR033739">
    <property type="entry name" value="M10A_MMP"/>
</dbReference>
<dbReference type="InterPro" id="IPR024079">
    <property type="entry name" value="MetalloPept_cat_dom_sf"/>
</dbReference>
<dbReference type="InterPro" id="IPR001818">
    <property type="entry name" value="Pept_M10_metallopeptidase"/>
</dbReference>
<dbReference type="InterPro" id="IPR021190">
    <property type="entry name" value="Pept_M10A"/>
</dbReference>
<dbReference type="InterPro" id="IPR021158">
    <property type="entry name" value="Pept_M10A_Zn_BS"/>
</dbReference>
<dbReference type="InterPro" id="IPR006026">
    <property type="entry name" value="Peptidase_Metallo"/>
</dbReference>
<dbReference type="InterPro" id="IPR002477">
    <property type="entry name" value="Peptidoglycan-bd-like"/>
</dbReference>
<dbReference type="InterPro" id="IPR036365">
    <property type="entry name" value="PGBD-like_sf"/>
</dbReference>
<dbReference type="PANTHER" id="PTHR10201:SF151">
    <property type="entry name" value="INTERSTITIAL COLLAGENASE"/>
    <property type="match status" value="1"/>
</dbReference>
<dbReference type="PANTHER" id="PTHR10201">
    <property type="entry name" value="MATRIX METALLOPROTEINASE"/>
    <property type="match status" value="1"/>
</dbReference>
<dbReference type="Pfam" id="PF00045">
    <property type="entry name" value="Hemopexin"/>
    <property type="match status" value="2"/>
</dbReference>
<dbReference type="Pfam" id="PF00413">
    <property type="entry name" value="Peptidase_M10"/>
    <property type="match status" value="1"/>
</dbReference>
<dbReference type="Pfam" id="PF01471">
    <property type="entry name" value="PG_binding_1"/>
    <property type="match status" value="1"/>
</dbReference>
<dbReference type="PIRSF" id="PIRSF001191">
    <property type="entry name" value="Peptidase_M10A_matrix"/>
    <property type="match status" value="1"/>
</dbReference>
<dbReference type="PRINTS" id="PR00138">
    <property type="entry name" value="MATRIXIN"/>
</dbReference>
<dbReference type="SMART" id="SM00120">
    <property type="entry name" value="HX"/>
    <property type="match status" value="4"/>
</dbReference>
<dbReference type="SMART" id="SM00235">
    <property type="entry name" value="ZnMc"/>
    <property type="match status" value="1"/>
</dbReference>
<dbReference type="SUPFAM" id="SSF50923">
    <property type="entry name" value="Hemopexin-like domain"/>
    <property type="match status" value="1"/>
</dbReference>
<dbReference type="SUPFAM" id="SSF55486">
    <property type="entry name" value="Metalloproteases ('zincins'), catalytic domain"/>
    <property type="match status" value="1"/>
</dbReference>
<dbReference type="SUPFAM" id="SSF47090">
    <property type="entry name" value="PGBD-like"/>
    <property type="match status" value="1"/>
</dbReference>
<dbReference type="PROSITE" id="PS00546">
    <property type="entry name" value="CYSTEINE_SWITCH"/>
    <property type="match status" value="1"/>
</dbReference>
<dbReference type="PROSITE" id="PS00024">
    <property type="entry name" value="HEMOPEXIN"/>
    <property type="match status" value="1"/>
</dbReference>
<dbReference type="PROSITE" id="PS51642">
    <property type="entry name" value="HEMOPEXIN_2"/>
    <property type="match status" value="4"/>
</dbReference>
<dbReference type="PROSITE" id="PS00142">
    <property type="entry name" value="ZINC_PROTEASE"/>
    <property type="match status" value="1"/>
</dbReference>
<protein>
    <recommendedName>
        <fullName>Interstitial collagenase B</fullName>
        <ecNumber>3.4.24.7</ecNumber>
    </recommendedName>
    <alternativeName>
        <fullName>Matrix metalloproteinase-1b</fullName>
        <shortName>MMP-1b</shortName>
    </alternativeName>
    <alternativeName>
        <fullName>Mcol-B</fullName>
    </alternativeName>
</protein>
<proteinExistence type="evidence at transcript level"/>
<feature type="signal peptide" evidence="2">
    <location>
        <begin position="1"/>
        <end position="17"/>
    </location>
</feature>
<feature type="propeptide" id="PRO_0000042647" description="Activation peptide" evidence="1">
    <location>
        <begin position="18"/>
        <end position="96"/>
    </location>
</feature>
<feature type="chain" id="PRO_0000042648" description="Interstitial collagenase B">
    <location>
        <begin position="97"/>
        <end position="463"/>
    </location>
</feature>
<feature type="repeat" description="Hemopexin 1">
    <location>
        <begin position="278"/>
        <end position="321"/>
    </location>
</feature>
<feature type="repeat" description="Hemopexin 2">
    <location>
        <begin position="322"/>
        <end position="368"/>
    </location>
</feature>
<feature type="repeat" description="Hemopexin 3">
    <location>
        <begin position="371"/>
        <end position="419"/>
    </location>
</feature>
<feature type="repeat" description="Hemopexin 4">
    <location>
        <begin position="420"/>
        <end position="463"/>
    </location>
</feature>
<feature type="region of interest" description="Metalloprotease" evidence="1">
    <location>
        <begin position="95"/>
        <end position="273"/>
    </location>
</feature>
<feature type="short sequence motif" description="Cysteine switch" evidence="1">
    <location>
        <begin position="87"/>
        <end position="94"/>
    </location>
</feature>
<feature type="active site" evidence="3">
    <location>
        <position position="216"/>
    </location>
</feature>
<feature type="binding site" description="in inhibited form" evidence="1">
    <location>
        <position position="89"/>
    </location>
    <ligand>
        <name>Zn(2+)</name>
        <dbReference type="ChEBI" id="CHEBI:29105"/>
        <label>2</label>
        <note>catalytic</note>
    </ligand>
</feature>
<feature type="binding site" evidence="1">
    <location>
        <position position="155"/>
    </location>
    <ligand>
        <name>Ca(2+)</name>
        <dbReference type="ChEBI" id="CHEBI:29108"/>
        <label>2</label>
    </ligand>
</feature>
<feature type="binding site" evidence="1">
    <location>
        <position position="165"/>
    </location>
    <ligand>
        <name>Zn(2+)</name>
        <dbReference type="ChEBI" id="CHEBI:29105"/>
        <label>1</label>
    </ligand>
</feature>
<feature type="binding site" evidence="1">
    <location>
        <position position="167"/>
    </location>
    <ligand>
        <name>Zn(2+)</name>
        <dbReference type="ChEBI" id="CHEBI:29105"/>
        <label>1</label>
    </ligand>
</feature>
<feature type="binding site" evidence="1">
    <location>
        <position position="172"/>
    </location>
    <ligand>
        <name>Ca(2+)</name>
        <dbReference type="ChEBI" id="CHEBI:29108"/>
        <label>3</label>
    </ligand>
</feature>
<feature type="binding site" evidence="1">
    <location>
        <position position="173"/>
    </location>
    <ligand>
        <name>Ca(2+)</name>
        <dbReference type="ChEBI" id="CHEBI:29108"/>
        <label>3</label>
    </ligand>
</feature>
<feature type="binding site" evidence="1">
    <location>
        <position position="180"/>
    </location>
    <ligand>
        <name>Zn(2+)</name>
        <dbReference type="ChEBI" id="CHEBI:29105"/>
        <label>1</label>
    </ligand>
</feature>
<feature type="binding site" evidence="1">
    <location>
        <position position="187"/>
    </location>
    <ligand>
        <name>Ca(2+)</name>
        <dbReference type="ChEBI" id="CHEBI:29108"/>
        <label>2</label>
    </ligand>
</feature>
<feature type="binding site" evidence="1">
    <location>
        <position position="189"/>
    </location>
    <ligand>
        <name>Ca(2+)</name>
        <dbReference type="ChEBI" id="CHEBI:29108"/>
        <label>2</label>
    </ligand>
</feature>
<feature type="binding site" evidence="1">
    <location>
        <position position="193"/>
    </location>
    <ligand>
        <name>Zn(2+)</name>
        <dbReference type="ChEBI" id="CHEBI:29105"/>
        <label>1</label>
    </ligand>
</feature>
<feature type="binding site" evidence="1">
    <location>
        <position position="195"/>
    </location>
    <ligand>
        <name>Ca(2+)</name>
        <dbReference type="ChEBI" id="CHEBI:29108"/>
        <label>3</label>
    </ligand>
</feature>
<feature type="binding site" evidence="1">
    <location>
        <position position="215"/>
    </location>
    <ligand>
        <name>Zn(2+)</name>
        <dbReference type="ChEBI" id="CHEBI:29105"/>
        <label>2</label>
        <note>catalytic</note>
    </ligand>
</feature>
<feature type="binding site" evidence="1">
    <location>
        <position position="219"/>
    </location>
    <ligand>
        <name>Zn(2+)</name>
        <dbReference type="ChEBI" id="CHEBI:29105"/>
        <label>2</label>
        <note>catalytic</note>
    </ligand>
</feature>
<feature type="binding site" evidence="1">
    <location>
        <position position="225"/>
    </location>
    <ligand>
        <name>Zn(2+)</name>
        <dbReference type="ChEBI" id="CHEBI:29105"/>
        <label>2</label>
        <note>catalytic</note>
    </ligand>
</feature>
<feature type="binding site" evidence="1">
    <location>
        <position position="282"/>
    </location>
    <ligand>
        <name>Ca(2+)</name>
        <dbReference type="ChEBI" id="CHEBI:29108"/>
        <label>4</label>
    </ligand>
</feature>
<feature type="binding site" evidence="1">
    <location>
        <position position="375"/>
    </location>
    <ligand>
        <name>Ca(2+)</name>
        <dbReference type="ChEBI" id="CHEBI:29108"/>
        <label>4</label>
    </ligand>
</feature>
<feature type="binding site" evidence="1">
    <location>
        <position position="424"/>
    </location>
    <ligand>
        <name>Ca(2+)</name>
        <dbReference type="ChEBI" id="CHEBI:29108"/>
        <label>4</label>
    </ligand>
</feature>
<feature type="glycosylation site" description="N-linked (GlcNAc...) asparagine" evidence="2">
    <location>
        <position position="370"/>
    </location>
</feature>
<feature type="disulfide bond" evidence="1">
    <location>
        <begin position="275"/>
        <end position="463"/>
    </location>
</feature>
<organism>
    <name type="scientific">Mus musculus</name>
    <name type="common">Mouse</name>
    <dbReference type="NCBI Taxonomy" id="10090"/>
    <lineage>
        <taxon>Eukaryota</taxon>
        <taxon>Metazoa</taxon>
        <taxon>Chordata</taxon>
        <taxon>Craniata</taxon>
        <taxon>Vertebrata</taxon>
        <taxon>Euteleostomi</taxon>
        <taxon>Mammalia</taxon>
        <taxon>Eutheria</taxon>
        <taxon>Euarchontoglires</taxon>
        <taxon>Glires</taxon>
        <taxon>Rodentia</taxon>
        <taxon>Myomorpha</taxon>
        <taxon>Muroidea</taxon>
        <taxon>Muridae</taxon>
        <taxon>Murinae</taxon>
        <taxon>Mus</taxon>
        <taxon>Mus</taxon>
    </lineage>
</organism>
<reference key="1">
    <citation type="journal article" date="2001" name="J. Biol. Chem.">
        <title>Identification and enzymatic characterization of two diverging murine counterparts of human interstitial collagenase (MMP-1) expressed at sites of embryo implantation.</title>
        <authorList>
            <person name="Balbin M."/>
            <person name="Fueyo A."/>
            <person name="Knauper V."/>
            <person name="Lopez J.M."/>
            <person name="Alvarez J."/>
            <person name="Sanchez L.M."/>
            <person name="Quesada V."/>
            <person name="Bordallo J."/>
            <person name="Murphy G."/>
            <person name="Lopez-Otin C."/>
        </authorList>
    </citation>
    <scope>NUCLEOTIDE SEQUENCE [MRNA]</scope>
</reference>
<gene>
    <name type="primary">Mmp1b</name>
    <name type="synonym">McolB</name>
</gene>
<comment type="catalytic activity">
    <reaction>
        <text>Cleavage of the triple helix of collagen at about three-quarters of the length of the molecule from the N-terminus, at 775-Gly-|-Ile-776 in the alpha1(I) chain. Cleaves synthetic substrates and alpha-macroglobulins at bonds where P1' is a hydrophobic residue.</text>
        <dbReference type="EC" id="3.4.24.7"/>
    </reaction>
</comment>
<comment type="cofactor">
    <cofactor evidence="1">
        <name>Ca(2+)</name>
        <dbReference type="ChEBI" id="CHEBI:29108"/>
    </cofactor>
    <text evidence="1">Binds 4 Ca(2+) ions per subunit.</text>
</comment>
<comment type="cofactor">
    <cofactor evidence="1">
        <name>Zn(2+)</name>
        <dbReference type="ChEBI" id="CHEBI:29105"/>
    </cofactor>
    <text evidence="1">Binds 2 Zn(2+) ions per subunit.</text>
</comment>
<comment type="activity regulation">
    <text evidence="1">Can be activated without removal of the activation peptide.</text>
</comment>
<comment type="subcellular location">
    <subcellularLocation>
        <location evidence="4">Secreted</location>
        <location evidence="4">Extracellular space</location>
        <location evidence="4">Extracellular matrix</location>
    </subcellularLocation>
</comment>
<comment type="domain">
    <text>The conserved cysteine present in the cysteine-switch motif binds the catalytic zinc ion, thus inhibiting the enzyme. The dissociation of the cysteine from the zinc ion upon the activation-peptide release activates the enzyme.</text>
</comment>
<comment type="similarity">
    <text evidence="4">Belongs to the peptidase M10A family.</text>
</comment>
<name>MMP1B_MOUSE</name>
<accession>Q9EPL6</accession>
<evidence type="ECO:0000250" key="1"/>
<evidence type="ECO:0000255" key="2"/>
<evidence type="ECO:0000255" key="3">
    <source>
        <dbReference type="PROSITE-ProRule" id="PRU10095"/>
    </source>
</evidence>
<evidence type="ECO:0000305" key="4"/>